<accession>Q4G349</accession>
<dbReference type="EMBL" id="AY741371">
    <property type="protein sequence ID" value="AAX13917.1"/>
    <property type="molecule type" value="Genomic_DNA"/>
</dbReference>
<dbReference type="RefSeq" id="YP_277418.1">
    <property type="nucleotide sequence ID" value="NC_007288.1"/>
</dbReference>
<dbReference type="SMR" id="Q4G349"/>
<dbReference type="STRING" id="2903.Q4G349"/>
<dbReference type="GeneID" id="3562502"/>
<dbReference type="GO" id="GO:0009507">
    <property type="term" value="C:chloroplast"/>
    <property type="evidence" value="ECO:0007669"/>
    <property type="project" value="UniProtKB-SubCell"/>
</dbReference>
<dbReference type="GO" id="GO:0005739">
    <property type="term" value="C:mitochondrion"/>
    <property type="evidence" value="ECO:0007669"/>
    <property type="project" value="TreeGrafter"/>
</dbReference>
<dbReference type="GO" id="GO:0015935">
    <property type="term" value="C:small ribosomal subunit"/>
    <property type="evidence" value="ECO:0007669"/>
    <property type="project" value="TreeGrafter"/>
</dbReference>
<dbReference type="GO" id="GO:0019843">
    <property type="term" value="F:rRNA binding"/>
    <property type="evidence" value="ECO:0007669"/>
    <property type="project" value="UniProtKB-UniRule"/>
</dbReference>
<dbReference type="GO" id="GO:0003735">
    <property type="term" value="F:structural constituent of ribosome"/>
    <property type="evidence" value="ECO:0007669"/>
    <property type="project" value="InterPro"/>
</dbReference>
<dbReference type="GO" id="GO:0006412">
    <property type="term" value="P:translation"/>
    <property type="evidence" value="ECO:0007669"/>
    <property type="project" value="UniProtKB-UniRule"/>
</dbReference>
<dbReference type="FunFam" id="1.10.8.50:FF:000001">
    <property type="entry name" value="30S ribosomal protein S13"/>
    <property type="match status" value="1"/>
</dbReference>
<dbReference type="Gene3D" id="1.10.8.50">
    <property type="match status" value="1"/>
</dbReference>
<dbReference type="Gene3D" id="4.10.910.10">
    <property type="entry name" value="30s ribosomal protein s13, domain 2"/>
    <property type="match status" value="1"/>
</dbReference>
<dbReference type="HAMAP" id="MF_01315">
    <property type="entry name" value="Ribosomal_uS13"/>
    <property type="match status" value="1"/>
</dbReference>
<dbReference type="InterPro" id="IPR027437">
    <property type="entry name" value="Rbsml_uS13_C"/>
</dbReference>
<dbReference type="InterPro" id="IPR001892">
    <property type="entry name" value="Ribosomal_uS13"/>
</dbReference>
<dbReference type="InterPro" id="IPR010979">
    <property type="entry name" value="Ribosomal_uS13-like_H2TH"/>
</dbReference>
<dbReference type="InterPro" id="IPR019980">
    <property type="entry name" value="Ribosomal_uS13_bac-type"/>
</dbReference>
<dbReference type="InterPro" id="IPR018269">
    <property type="entry name" value="Ribosomal_uS13_CS"/>
</dbReference>
<dbReference type="NCBIfam" id="TIGR03631">
    <property type="entry name" value="uS13_bact"/>
    <property type="match status" value="1"/>
</dbReference>
<dbReference type="PANTHER" id="PTHR10871">
    <property type="entry name" value="30S RIBOSOMAL PROTEIN S13/40S RIBOSOMAL PROTEIN S18"/>
    <property type="match status" value="1"/>
</dbReference>
<dbReference type="PANTHER" id="PTHR10871:SF1">
    <property type="entry name" value="SMALL RIBOSOMAL SUBUNIT PROTEIN US13M"/>
    <property type="match status" value="1"/>
</dbReference>
<dbReference type="Pfam" id="PF00416">
    <property type="entry name" value="Ribosomal_S13"/>
    <property type="match status" value="1"/>
</dbReference>
<dbReference type="PIRSF" id="PIRSF002134">
    <property type="entry name" value="Ribosomal_S13"/>
    <property type="match status" value="1"/>
</dbReference>
<dbReference type="SUPFAM" id="SSF46946">
    <property type="entry name" value="S13-like H2TH domain"/>
    <property type="match status" value="1"/>
</dbReference>
<dbReference type="PROSITE" id="PS00646">
    <property type="entry name" value="RIBOSOMAL_S13_1"/>
    <property type="match status" value="1"/>
</dbReference>
<dbReference type="PROSITE" id="PS50159">
    <property type="entry name" value="RIBOSOMAL_S13_2"/>
    <property type="match status" value="1"/>
</dbReference>
<feature type="chain" id="PRO_0000230587" description="Small ribosomal subunit protein uS13c">
    <location>
        <begin position="1"/>
        <end position="124"/>
    </location>
</feature>
<feature type="region of interest" description="Disordered" evidence="2">
    <location>
        <begin position="100"/>
        <end position="124"/>
    </location>
</feature>
<feature type="compositionally biased region" description="Basic residues" evidence="2">
    <location>
        <begin position="101"/>
        <end position="124"/>
    </location>
</feature>
<reference key="1">
    <citation type="journal article" date="2005" name="DNA Res.">
        <title>The complete plastid genome sequence of the haptophyte Emiliania huxleyi: a comparison to other plastid genomes.</title>
        <authorList>
            <person name="Sanchez-Puerta M.V."/>
            <person name="Bachvaroff T.R."/>
            <person name="Delwiche C.F."/>
        </authorList>
    </citation>
    <scope>NUCLEOTIDE SEQUENCE [LARGE SCALE GENOMIC DNA]</scope>
    <source>
        <strain>CCMP373 / CSIRO-CS-57 / BT6</strain>
    </source>
</reference>
<sequence>MVRISGVDLPRNKRIQIGLTSIFGIGNTSADKILTTANLSPDIRCSDLTDEQVSSLRTIIDESYQTEGDLRRVYSLNIKRLTEIGSAAGRRHRVNLPVRGQRTRTNARTRKGKVKTAVAKKKGR</sequence>
<evidence type="ECO:0000255" key="1">
    <source>
        <dbReference type="HAMAP-Rule" id="MF_01315"/>
    </source>
</evidence>
<evidence type="ECO:0000256" key="2">
    <source>
        <dbReference type="SAM" id="MobiDB-lite"/>
    </source>
</evidence>
<evidence type="ECO:0000305" key="3"/>
<comment type="function">
    <text evidence="1">Located at the top of the head of the 30S subunit, it contacts several helices of the 16S rRNA.</text>
</comment>
<comment type="subunit">
    <text>Part of the 30S ribosomal subunit.</text>
</comment>
<comment type="subcellular location">
    <subcellularLocation>
        <location>Plastid</location>
        <location>Chloroplast</location>
    </subcellularLocation>
</comment>
<comment type="similarity">
    <text evidence="1">Belongs to the universal ribosomal protein uS13 family.</text>
</comment>
<geneLocation type="chloroplast"/>
<keyword id="KW-0150">Chloroplast</keyword>
<keyword id="KW-0934">Plastid</keyword>
<keyword id="KW-0687">Ribonucleoprotein</keyword>
<keyword id="KW-0689">Ribosomal protein</keyword>
<keyword id="KW-0694">RNA-binding</keyword>
<keyword id="KW-0699">rRNA-binding</keyword>
<name>RR13_EMIHU</name>
<gene>
    <name evidence="1" type="primary">rps13</name>
</gene>
<protein>
    <recommendedName>
        <fullName evidence="1">Small ribosomal subunit protein uS13c</fullName>
    </recommendedName>
    <alternativeName>
        <fullName evidence="3">30S ribosomal protein S13, chloroplastic</fullName>
    </alternativeName>
</protein>
<proteinExistence type="inferred from homology"/>
<organism>
    <name type="scientific">Emiliania huxleyi</name>
    <name type="common">Coccolithophore</name>
    <name type="synonym">Pontosphaera huxleyi</name>
    <dbReference type="NCBI Taxonomy" id="2903"/>
    <lineage>
        <taxon>Eukaryota</taxon>
        <taxon>Haptista</taxon>
        <taxon>Haptophyta</taxon>
        <taxon>Prymnesiophyceae</taxon>
        <taxon>Isochrysidales</taxon>
        <taxon>Noelaerhabdaceae</taxon>
        <taxon>Emiliania</taxon>
    </lineage>
</organism>